<sequence length="157" mass="18116">MEEREESSSHEHLKEKLRELEEEWTAMKTGKNSSAVSWITVEDALEYVENSPRNLMLSLQHKPKAEMIQEISPLRRKLFHDSDDDDQTKKTTLLSHSSCWSSNVTSSSDTTKAKKKTTIRRFVSVTMVLLLSWVLVVLMNHFDHLSMNTQIITLVPT</sequence>
<dbReference type="EMBL" id="AL035523">
    <property type="protein sequence ID" value="CAB36737.1"/>
    <property type="molecule type" value="Genomic_DNA"/>
</dbReference>
<dbReference type="EMBL" id="AL161562">
    <property type="protein sequence ID" value="CAB79404.1"/>
    <property type="molecule type" value="Genomic_DNA"/>
</dbReference>
<dbReference type="EMBL" id="CP002687">
    <property type="protein sequence ID" value="AEE84979.1"/>
    <property type="molecule type" value="Genomic_DNA"/>
</dbReference>
<dbReference type="PIR" id="T05516">
    <property type="entry name" value="T05516"/>
</dbReference>
<dbReference type="RefSeq" id="NP_194225.1">
    <property type="nucleotide sequence ID" value="NM_118627.1"/>
</dbReference>
<dbReference type="STRING" id="3702.Q9SW31"/>
<dbReference type="PaxDb" id="3702-AT4G24950.1"/>
<dbReference type="EnsemblPlants" id="AT4G24950.1">
    <property type="protein sequence ID" value="AT4G24950.1"/>
    <property type="gene ID" value="AT4G24950"/>
</dbReference>
<dbReference type="GeneID" id="828597"/>
<dbReference type="Gramene" id="AT4G24950.1">
    <property type="protein sequence ID" value="AT4G24950.1"/>
    <property type="gene ID" value="AT4G24950"/>
</dbReference>
<dbReference type="KEGG" id="ath:AT4G24950"/>
<dbReference type="Araport" id="AT4G24950"/>
<dbReference type="TAIR" id="AT4G24950">
    <property type="gene designation" value="SINE4"/>
</dbReference>
<dbReference type="eggNOG" id="ENOG502R1MP">
    <property type="taxonomic scope" value="Eukaryota"/>
</dbReference>
<dbReference type="HOGENOM" id="CLU_1689121_0_0_1"/>
<dbReference type="InParanoid" id="Q9SW31"/>
<dbReference type="OMA" id="VSWITVE"/>
<dbReference type="PRO" id="PR:Q9SW31"/>
<dbReference type="Proteomes" id="UP000006548">
    <property type="component" value="Chromosome 4"/>
</dbReference>
<dbReference type="ExpressionAtlas" id="Q9SW31">
    <property type="expression patterns" value="baseline and differential"/>
</dbReference>
<dbReference type="GO" id="GO:0005635">
    <property type="term" value="C:nuclear envelope"/>
    <property type="evidence" value="ECO:0000314"/>
    <property type="project" value="TAIR"/>
</dbReference>
<dbReference type="GO" id="GO:0031965">
    <property type="term" value="C:nuclear membrane"/>
    <property type="evidence" value="ECO:0007669"/>
    <property type="project" value="UniProtKB-SubCell"/>
</dbReference>
<reference key="1">
    <citation type="journal article" date="1999" name="Nature">
        <title>Sequence and analysis of chromosome 4 of the plant Arabidopsis thaliana.</title>
        <authorList>
            <person name="Mayer K.F.X."/>
            <person name="Schueller C."/>
            <person name="Wambutt R."/>
            <person name="Murphy G."/>
            <person name="Volckaert G."/>
            <person name="Pohl T."/>
            <person name="Duesterhoeft A."/>
            <person name="Stiekema W."/>
            <person name="Entian K.-D."/>
            <person name="Terryn N."/>
            <person name="Harris B."/>
            <person name="Ansorge W."/>
            <person name="Brandt P."/>
            <person name="Grivell L.A."/>
            <person name="Rieger M."/>
            <person name="Weichselgartner M."/>
            <person name="de Simone V."/>
            <person name="Obermaier B."/>
            <person name="Mache R."/>
            <person name="Mueller M."/>
            <person name="Kreis M."/>
            <person name="Delseny M."/>
            <person name="Puigdomenech P."/>
            <person name="Watson M."/>
            <person name="Schmidtheini T."/>
            <person name="Reichert B."/>
            <person name="Portetelle D."/>
            <person name="Perez-Alonso M."/>
            <person name="Boutry M."/>
            <person name="Bancroft I."/>
            <person name="Vos P."/>
            <person name="Hoheisel J."/>
            <person name="Zimmermann W."/>
            <person name="Wedler H."/>
            <person name="Ridley P."/>
            <person name="Langham S.-A."/>
            <person name="McCullagh B."/>
            <person name="Bilham L."/>
            <person name="Robben J."/>
            <person name="van der Schueren J."/>
            <person name="Grymonprez B."/>
            <person name="Chuang Y.-J."/>
            <person name="Vandenbussche F."/>
            <person name="Braeken M."/>
            <person name="Weltjens I."/>
            <person name="Voet M."/>
            <person name="Bastiaens I."/>
            <person name="Aert R."/>
            <person name="Defoor E."/>
            <person name="Weitzenegger T."/>
            <person name="Bothe G."/>
            <person name="Ramsperger U."/>
            <person name="Hilbert H."/>
            <person name="Braun M."/>
            <person name="Holzer E."/>
            <person name="Brandt A."/>
            <person name="Peters S."/>
            <person name="van Staveren M."/>
            <person name="Dirkse W."/>
            <person name="Mooijman P."/>
            <person name="Klein Lankhorst R."/>
            <person name="Rose M."/>
            <person name="Hauf J."/>
            <person name="Koetter P."/>
            <person name="Berneiser S."/>
            <person name="Hempel S."/>
            <person name="Feldpausch M."/>
            <person name="Lamberth S."/>
            <person name="Van den Daele H."/>
            <person name="De Keyser A."/>
            <person name="Buysshaert C."/>
            <person name="Gielen J."/>
            <person name="Villarroel R."/>
            <person name="De Clercq R."/>
            <person name="van Montagu M."/>
            <person name="Rogers J."/>
            <person name="Cronin A."/>
            <person name="Quail M.A."/>
            <person name="Bray-Allen S."/>
            <person name="Clark L."/>
            <person name="Doggett J."/>
            <person name="Hall S."/>
            <person name="Kay M."/>
            <person name="Lennard N."/>
            <person name="McLay K."/>
            <person name="Mayes R."/>
            <person name="Pettett A."/>
            <person name="Rajandream M.A."/>
            <person name="Lyne M."/>
            <person name="Benes V."/>
            <person name="Rechmann S."/>
            <person name="Borkova D."/>
            <person name="Bloecker H."/>
            <person name="Scharfe M."/>
            <person name="Grimm M."/>
            <person name="Loehnert T.-H."/>
            <person name="Dose S."/>
            <person name="de Haan M."/>
            <person name="Maarse A.C."/>
            <person name="Schaefer M."/>
            <person name="Mueller-Auer S."/>
            <person name="Gabel C."/>
            <person name="Fuchs M."/>
            <person name="Fartmann B."/>
            <person name="Granderath K."/>
            <person name="Dauner D."/>
            <person name="Herzl A."/>
            <person name="Neumann S."/>
            <person name="Argiriou A."/>
            <person name="Vitale D."/>
            <person name="Liguori R."/>
            <person name="Piravandi E."/>
            <person name="Massenet O."/>
            <person name="Quigley F."/>
            <person name="Clabauld G."/>
            <person name="Muendlein A."/>
            <person name="Felber R."/>
            <person name="Schnabl S."/>
            <person name="Hiller R."/>
            <person name="Schmidt W."/>
            <person name="Lecharny A."/>
            <person name="Aubourg S."/>
            <person name="Chefdor F."/>
            <person name="Cooke R."/>
            <person name="Berger C."/>
            <person name="Monfort A."/>
            <person name="Casacuberta E."/>
            <person name="Gibbons T."/>
            <person name="Weber N."/>
            <person name="Vandenbol M."/>
            <person name="Bargues M."/>
            <person name="Terol J."/>
            <person name="Torres A."/>
            <person name="Perez-Perez A."/>
            <person name="Purnelle B."/>
            <person name="Bent E."/>
            <person name="Johnson S."/>
            <person name="Tacon D."/>
            <person name="Jesse T."/>
            <person name="Heijnen L."/>
            <person name="Schwarz S."/>
            <person name="Scholler P."/>
            <person name="Heber S."/>
            <person name="Francs P."/>
            <person name="Bielke C."/>
            <person name="Frishman D."/>
            <person name="Haase D."/>
            <person name="Lemcke K."/>
            <person name="Mewes H.-W."/>
            <person name="Stocker S."/>
            <person name="Zaccaria P."/>
            <person name="Bevan M."/>
            <person name="Wilson R.K."/>
            <person name="de la Bastide M."/>
            <person name="Habermann K."/>
            <person name="Parnell L."/>
            <person name="Dedhia N."/>
            <person name="Gnoj L."/>
            <person name="Schutz K."/>
            <person name="Huang E."/>
            <person name="Spiegel L."/>
            <person name="Sekhon M."/>
            <person name="Murray J."/>
            <person name="Sheet P."/>
            <person name="Cordes M."/>
            <person name="Abu-Threideh J."/>
            <person name="Stoneking T."/>
            <person name="Kalicki J."/>
            <person name="Graves T."/>
            <person name="Harmon G."/>
            <person name="Edwards J."/>
            <person name="Latreille P."/>
            <person name="Courtney L."/>
            <person name="Cloud J."/>
            <person name="Abbott A."/>
            <person name="Scott K."/>
            <person name="Johnson D."/>
            <person name="Minx P."/>
            <person name="Bentley D."/>
            <person name="Fulton B."/>
            <person name="Miller N."/>
            <person name="Greco T."/>
            <person name="Kemp K."/>
            <person name="Kramer J."/>
            <person name="Fulton L."/>
            <person name="Mardis E."/>
            <person name="Dante M."/>
            <person name="Pepin K."/>
            <person name="Hillier L.W."/>
            <person name="Nelson J."/>
            <person name="Spieth J."/>
            <person name="Ryan E."/>
            <person name="Andrews S."/>
            <person name="Geisel C."/>
            <person name="Layman D."/>
            <person name="Du H."/>
            <person name="Ali J."/>
            <person name="Berghoff A."/>
            <person name="Jones K."/>
            <person name="Drone K."/>
            <person name="Cotton M."/>
            <person name="Joshu C."/>
            <person name="Antonoiu B."/>
            <person name="Zidanic M."/>
            <person name="Strong C."/>
            <person name="Sun H."/>
            <person name="Lamar B."/>
            <person name="Yordan C."/>
            <person name="Ma P."/>
            <person name="Zhong J."/>
            <person name="Preston R."/>
            <person name="Vil D."/>
            <person name="Shekher M."/>
            <person name="Matero A."/>
            <person name="Shah R."/>
            <person name="Swaby I.K."/>
            <person name="O'Shaughnessy A."/>
            <person name="Rodriguez M."/>
            <person name="Hoffman J."/>
            <person name="Till S."/>
            <person name="Granat S."/>
            <person name="Shohdy N."/>
            <person name="Hasegawa A."/>
            <person name="Hameed A."/>
            <person name="Lodhi M."/>
            <person name="Johnson A."/>
            <person name="Chen E."/>
            <person name="Marra M.A."/>
            <person name="Martienssen R."/>
            <person name="McCombie W.R."/>
        </authorList>
    </citation>
    <scope>NUCLEOTIDE SEQUENCE [LARGE SCALE GENOMIC DNA]</scope>
    <source>
        <strain>cv. Columbia</strain>
    </source>
</reference>
<reference key="2">
    <citation type="journal article" date="2017" name="Plant J.">
        <title>Araport11: a complete reannotation of the Arabidopsis thaliana reference genome.</title>
        <authorList>
            <person name="Cheng C.Y."/>
            <person name="Krishnakumar V."/>
            <person name="Chan A.P."/>
            <person name="Thibaud-Nissen F."/>
            <person name="Schobel S."/>
            <person name="Town C.D."/>
        </authorList>
    </citation>
    <scope>GENOME REANNOTATION</scope>
    <source>
        <strain>cv. Columbia</strain>
    </source>
</reference>
<reference key="3">
    <citation type="journal article" date="2014" name="J. Cell Biol.">
        <title>Identification of unique SUN-interacting nuclear envelope proteins with diverse functions in plants.</title>
        <authorList>
            <person name="Zhou X."/>
            <person name="Graumann K."/>
            <person name="Wirthmueller L."/>
            <person name="Jones J.D."/>
            <person name="Meier I."/>
        </authorList>
    </citation>
    <scope>GENE FAMILY</scope>
    <scope>NOMENCLATURE</scope>
    <scope>SUBCELLULAR LOCATION</scope>
    <scope>INTERACTION WITH SINE1 AND SINE2</scope>
</reference>
<reference key="4">
    <citation type="journal article" date="2015" name="J. Exp. Bot.">
        <title>The plant nuclear envelope as a multifunctional platform LINCed by SUN and KASH.</title>
        <authorList>
            <person name="Zhou X."/>
            <person name="Graumann K."/>
            <person name="Meier I."/>
        </authorList>
    </citation>
    <scope>REVIEW</scope>
</reference>
<organism>
    <name type="scientific">Arabidopsis thaliana</name>
    <name type="common">Mouse-ear cress</name>
    <dbReference type="NCBI Taxonomy" id="3702"/>
    <lineage>
        <taxon>Eukaryota</taxon>
        <taxon>Viridiplantae</taxon>
        <taxon>Streptophyta</taxon>
        <taxon>Embryophyta</taxon>
        <taxon>Tracheophyta</taxon>
        <taxon>Spermatophyta</taxon>
        <taxon>Magnoliopsida</taxon>
        <taxon>eudicotyledons</taxon>
        <taxon>Gunneridae</taxon>
        <taxon>Pentapetalae</taxon>
        <taxon>rosids</taxon>
        <taxon>malvids</taxon>
        <taxon>Brassicales</taxon>
        <taxon>Brassicaceae</taxon>
        <taxon>Camelineae</taxon>
        <taxon>Arabidopsis</taxon>
    </lineage>
</organism>
<evidence type="ECO:0000255" key="1"/>
<evidence type="ECO:0000269" key="2">
    <source>
    </source>
</evidence>
<evidence type="ECO:0000303" key="3">
    <source>
    </source>
</evidence>
<evidence type="ECO:0000305" key="4">
    <source>
    </source>
</evidence>
<evidence type="ECO:0000312" key="5">
    <source>
        <dbReference type="Araport" id="AT4G24950"/>
    </source>
</evidence>
<evidence type="ECO:0000312" key="6">
    <source>
        <dbReference type="EMBL" id="CAB36737.1"/>
    </source>
</evidence>
<gene>
    <name evidence="3" type="primary">SINE4</name>
    <name evidence="5" type="ordered locus">At4g24950</name>
    <name evidence="6" type="ORF">F13M23.90</name>
</gene>
<name>SINE4_ARATH</name>
<protein>
    <recommendedName>
        <fullName evidence="3">Protein SINE4</fullName>
    </recommendedName>
</protein>
<accession>Q9SW31</accession>
<keyword id="KW-0472">Membrane</keyword>
<keyword id="KW-0539">Nucleus</keyword>
<keyword id="KW-1185">Reference proteome</keyword>
<keyword id="KW-0812">Transmembrane</keyword>
<keyword id="KW-1133">Transmembrane helix</keyword>
<comment type="subunit">
    <text evidence="2">Interacts with SUN1 and SUN2.</text>
</comment>
<comment type="subcellular location">
    <subcellularLocation>
        <location evidence="2">Nucleus membrane</location>
        <topology evidence="1">Single-pass membrane protein</topology>
    </subcellularLocation>
</comment>
<comment type="domain">
    <text evidence="4">The KASH domain, which contains a transmembrane domain, mediates the nuclear envelope targeting and is involved in the binding to the SUN proteins.</text>
</comment>
<feature type="chain" id="PRO_0000441684" description="Protein SINE4">
    <location>
        <begin position="1"/>
        <end position="157"/>
    </location>
</feature>
<feature type="transmembrane region" description="Helical" evidence="1">
    <location>
        <begin position="122"/>
        <end position="142"/>
    </location>
</feature>
<feature type="domain" description="KASH" evidence="4">
    <location>
        <begin position="104"/>
        <end position="157"/>
    </location>
</feature>
<feature type="short sequence motif" description="Required for nuclear localization" evidence="2">
    <location>
        <begin position="154"/>
        <end position="157"/>
    </location>
</feature>
<proteinExistence type="evidence at protein level"/>